<organism>
    <name type="scientific">Chlamydia pneumoniae</name>
    <name type="common">Chlamydophila pneumoniae</name>
    <dbReference type="NCBI Taxonomy" id="83558"/>
    <lineage>
        <taxon>Bacteria</taxon>
        <taxon>Pseudomonadati</taxon>
        <taxon>Chlamydiota</taxon>
        <taxon>Chlamydiia</taxon>
        <taxon>Chlamydiales</taxon>
        <taxon>Chlamydiaceae</taxon>
        <taxon>Chlamydia/Chlamydophila group</taxon>
        <taxon>Chlamydia</taxon>
    </lineage>
</organism>
<name>YBEY_CHLPN</name>
<comment type="function">
    <text evidence="1">Single strand-specific metallo-endoribonuclease involved in late-stage 70S ribosome quality control and in maturation of the 3' terminus of the 16S rRNA.</text>
</comment>
<comment type="cofactor">
    <cofactor evidence="1">
        <name>Zn(2+)</name>
        <dbReference type="ChEBI" id="CHEBI:29105"/>
    </cofactor>
    <text evidence="1">Binds 1 zinc ion.</text>
</comment>
<comment type="subcellular location">
    <subcellularLocation>
        <location evidence="1">Cytoplasm</location>
    </subcellularLocation>
</comment>
<comment type="similarity">
    <text evidence="1">Belongs to the endoribonuclease YbeY family.</text>
</comment>
<feature type="chain" id="PRO_0000102436" description="Endoribonuclease YbeY">
    <location>
        <begin position="1"/>
        <end position="158"/>
    </location>
</feature>
<feature type="binding site" evidence="1">
    <location>
        <position position="119"/>
    </location>
    <ligand>
        <name>Zn(2+)</name>
        <dbReference type="ChEBI" id="CHEBI:29105"/>
        <note>catalytic</note>
    </ligand>
</feature>
<feature type="binding site" evidence="1">
    <location>
        <position position="123"/>
    </location>
    <ligand>
        <name>Zn(2+)</name>
        <dbReference type="ChEBI" id="CHEBI:29105"/>
        <note>catalytic</note>
    </ligand>
</feature>
<feature type="binding site" evidence="1">
    <location>
        <position position="129"/>
    </location>
    <ligand>
        <name>Zn(2+)</name>
        <dbReference type="ChEBI" id="CHEBI:29105"/>
        <note>catalytic</note>
    </ligand>
</feature>
<sequence length="158" mass="18067">MTQEKIKIHVSNEQTCIPIHLVSVEKLVLTLLEHLKVTTNEIFIYFLEDKALAELHDKVFADPSLTDTITLPIDAPGDPAYPHVLGEAFISPQAALRFLENTSPNQEDIYEEISRYLVHSILHMLGYDDTSSEEKRKMRVKENQILCMLRKKHALLTA</sequence>
<keyword id="KW-0963">Cytoplasm</keyword>
<keyword id="KW-0255">Endonuclease</keyword>
<keyword id="KW-0378">Hydrolase</keyword>
<keyword id="KW-0479">Metal-binding</keyword>
<keyword id="KW-0540">Nuclease</keyword>
<keyword id="KW-0690">Ribosome biogenesis</keyword>
<keyword id="KW-0698">rRNA processing</keyword>
<keyword id="KW-0862">Zinc</keyword>
<proteinExistence type="inferred from homology"/>
<dbReference type="EC" id="3.1.-.-" evidence="1"/>
<dbReference type="EMBL" id="AE001363">
    <property type="protein sequence ID" value="AAD18649.1"/>
    <property type="molecule type" value="Genomic_DNA"/>
</dbReference>
<dbReference type="EMBL" id="AE002161">
    <property type="protein sequence ID" value="AAF38109.1"/>
    <property type="molecule type" value="Genomic_DNA"/>
</dbReference>
<dbReference type="EMBL" id="AE009440">
    <property type="protein sequence ID" value="AAP98459.1"/>
    <property type="molecule type" value="Genomic_DNA"/>
</dbReference>
<dbReference type="EMBL" id="BA000008">
    <property type="protein sequence ID" value="BAA98715.1"/>
    <property type="molecule type" value="Genomic_DNA"/>
</dbReference>
<dbReference type="PIR" id="A86554">
    <property type="entry name" value="A86554"/>
</dbReference>
<dbReference type="PIR" id="C72069">
    <property type="entry name" value="C72069"/>
</dbReference>
<dbReference type="RefSeq" id="NP_224705.1">
    <property type="nucleotide sequence ID" value="NC_000922.1"/>
</dbReference>
<dbReference type="RefSeq" id="WP_010883147.1">
    <property type="nucleotide sequence ID" value="NZ_LN847257.1"/>
</dbReference>
<dbReference type="SMR" id="Q9Z843"/>
<dbReference type="STRING" id="406984.CPK_ORF01024"/>
<dbReference type="GeneID" id="45050551"/>
<dbReference type="KEGG" id="cpa:CP_0245"/>
<dbReference type="KEGG" id="cpj:CPj0509"/>
<dbReference type="KEGG" id="cpn:CPn_0509"/>
<dbReference type="KEGG" id="cpt:CpB0530"/>
<dbReference type="PATRIC" id="fig|115713.3.peg.568"/>
<dbReference type="eggNOG" id="COG0319">
    <property type="taxonomic scope" value="Bacteria"/>
</dbReference>
<dbReference type="HOGENOM" id="CLU_106710_2_0_0"/>
<dbReference type="OrthoDB" id="9807740at2"/>
<dbReference type="Proteomes" id="UP000000583">
    <property type="component" value="Chromosome"/>
</dbReference>
<dbReference type="Proteomes" id="UP000000801">
    <property type="component" value="Chromosome"/>
</dbReference>
<dbReference type="GO" id="GO:0005737">
    <property type="term" value="C:cytoplasm"/>
    <property type="evidence" value="ECO:0007669"/>
    <property type="project" value="UniProtKB-SubCell"/>
</dbReference>
<dbReference type="GO" id="GO:0004222">
    <property type="term" value="F:metalloendopeptidase activity"/>
    <property type="evidence" value="ECO:0007669"/>
    <property type="project" value="InterPro"/>
</dbReference>
<dbReference type="GO" id="GO:0004521">
    <property type="term" value="F:RNA endonuclease activity"/>
    <property type="evidence" value="ECO:0007669"/>
    <property type="project" value="UniProtKB-UniRule"/>
</dbReference>
<dbReference type="GO" id="GO:0008270">
    <property type="term" value="F:zinc ion binding"/>
    <property type="evidence" value="ECO:0007669"/>
    <property type="project" value="UniProtKB-UniRule"/>
</dbReference>
<dbReference type="GO" id="GO:0006364">
    <property type="term" value="P:rRNA processing"/>
    <property type="evidence" value="ECO:0007669"/>
    <property type="project" value="UniProtKB-UniRule"/>
</dbReference>
<dbReference type="Gene3D" id="3.40.390.30">
    <property type="entry name" value="Metalloproteases ('zincins'), catalytic domain"/>
    <property type="match status" value="1"/>
</dbReference>
<dbReference type="HAMAP" id="MF_00009">
    <property type="entry name" value="Endoribonucl_YbeY"/>
    <property type="match status" value="1"/>
</dbReference>
<dbReference type="InterPro" id="IPR023091">
    <property type="entry name" value="MetalPrtase_cat_dom_sf_prd"/>
</dbReference>
<dbReference type="InterPro" id="IPR002036">
    <property type="entry name" value="YbeY"/>
</dbReference>
<dbReference type="NCBIfam" id="TIGR00043">
    <property type="entry name" value="rRNA maturation RNase YbeY"/>
    <property type="match status" value="1"/>
</dbReference>
<dbReference type="Pfam" id="PF02130">
    <property type="entry name" value="YbeY"/>
    <property type="match status" value="1"/>
</dbReference>
<dbReference type="SUPFAM" id="SSF55486">
    <property type="entry name" value="Metalloproteases ('zincins'), catalytic domain"/>
    <property type="match status" value="1"/>
</dbReference>
<gene>
    <name evidence="1" type="primary">ybeY</name>
    <name type="ordered locus">CPn_0509</name>
    <name type="ordered locus">CP_0245</name>
    <name type="ordered locus">CPj0509</name>
    <name type="ordered locus">CpB0530</name>
</gene>
<protein>
    <recommendedName>
        <fullName evidence="1">Endoribonuclease YbeY</fullName>
        <ecNumber evidence="1">3.1.-.-</ecNumber>
    </recommendedName>
</protein>
<accession>Q9Z843</accession>
<accession>Q7AIN8</accession>
<accession>Q7BXA2</accession>
<accession>Q7DEX2</accession>
<evidence type="ECO:0000255" key="1">
    <source>
        <dbReference type="HAMAP-Rule" id="MF_00009"/>
    </source>
</evidence>
<reference key="1">
    <citation type="journal article" date="1999" name="Nat. Genet.">
        <title>Comparative genomes of Chlamydia pneumoniae and C. trachomatis.</title>
        <authorList>
            <person name="Kalman S."/>
            <person name="Mitchell W.P."/>
            <person name="Marathe R."/>
            <person name="Lammel C.J."/>
            <person name="Fan J."/>
            <person name="Hyman R.W."/>
            <person name="Olinger L."/>
            <person name="Grimwood J."/>
            <person name="Davis R.W."/>
            <person name="Stephens R.S."/>
        </authorList>
    </citation>
    <scope>NUCLEOTIDE SEQUENCE [LARGE SCALE GENOMIC DNA]</scope>
    <source>
        <strain>CWL029</strain>
    </source>
</reference>
<reference key="2">
    <citation type="journal article" date="2000" name="Nucleic Acids Res.">
        <title>Genome sequences of Chlamydia trachomatis MoPn and Chlamydia pneumoniae AR39.</title>
        <authorList>
            <person name="Read T.D."/>
            <person name="Brunham R.C."/>
            <person name="Shen C."/>
            <person name="Gill S.R."/>
            <person name="Heidelberg J.F."/>
            <person name="White O."/>
            <person name="Hickey E.K."/>
            <person name="Peterson J.D."/>
            <person name="Utterback T.R."/>
            <person name="Berry K.J."/>
            <person name="Bass S."/>
            <person name="Linher K.D."/>
            <person name="Weidman J.F."/>
            <person name="Khouri H.M."/>
            <person name="Craven B."/>
            <person name="Bowman C."/>
            <person name="Dodson R.J."/>
            <person name="Gwinn M.L."/>
            <person name="Nelson W.C."/>
            <person name="DeBoy R.T."/>
            <person name="Kolonay J.F."/>
            <person name="McClarty G."/>
            <person name="Salzberg S.L."/>
            <person name="Eisen J.A."/>
            <person name="Fraser C.M."/>
        </authorList>
    </citation>
    <scope>NUCLEOTIDE SEQUENCE [LARGE SCALE GENOMIC DNA]</scope>
    <source>
        <strain>AR39</strain>
    </source>
</reference>
<reference key="3">
    <citation type="submission" date="2002-05" db="EMBL/GenBank/DDBJ databases">
        <title>The genome sequence of Chlamydia pneumoniae TW183 and comparison with other Chlamydia strains based on whole genome sequence analysis.</title>
        <authorList>
            <person name="Geng M.M."/>
            <person name="Schuhmacher A."/>
            <person name="Muehldorfer I."/>
            <person name="Bensch K.W."/>
            <person name="Schaefer K.P."/>
            <person name="Schneider S."/>
            <person name="Pohl T."/>
            <person name="Essig A."/>
            <person name="Marre R."/>
            <person name="Melchers K."/>
        </authorList>
    </citation>
    <scope>NUCLEOTIDE SEQUENCE [LARGE SCALE GENOMIC DNA]</scope>
    <source>
        <strain>TW-183</strain>
    </source>
</reference>
<reference key="4">
    <citation type="journal article" date="2000" name="Nucleic Acids Res.">
        <title>Comparison of whole genome sequences of Chlamydia pneumoniae J138 from Japan and CWL029 from USA.</title>
        <authorList>
            <person name="Shirai M."/>
            <person name="Hirakawa H."/>
            <person name="Kimoto M."/>
            <person name="Tabuchi M."/>
            <person name="Kishi F."/>
            <person name="Ouchi K."/>
            <person name="Shiba T."/>
            <person name="Ishii K."/>
            <person name="Hattori M."/>
            <person name="Kuhara S."/>
            <person name="Nakazawa T."/>
        </authorList>
    </citation>
    <scope>NUCLEOTIDE SEQUENCE [LARGE SCALE GENOMIC DNA]</scope>
    <source>
        <strain>J138</strain>
    </source>
</reference>